<feature type="chain" id="PRO_1000143596" description="NADH-quinone oxidoreductase subunit H">
    <location>
        <begin position="1"/>
        <end position="325"/>
    </location>
</feature>
<feature type="transmembrane region" description="Helical" evidence="1">
    <location>
        <begin position="11"/>
        <end position="31"/>
    </location>
</feature>
<feature type="transmembrane region" description="Helical" evidence="1">
    <location>
        <begin position="81"/>
        <end position="101"/>
    </location>
</feature>
<feature type="transmembrane region" description="Helical" evidence="1">
    <location>
        <begin position="114"/>
        <end position="134"/>
    </location>
</feature>
<feature type="transmembrane region" description="Helical" evidence="1">
    <location>
        <begin position="154"/>
        <end position="174"/>
    </location>
</feature>
<feature type="transmembrane region" description="Helical" evidence="1">
    <location>
        <begin position="186"/>
        <end position="206"/>
    </location>
</feature>
<feature type="transmembrane region" description="Helical" evidence="1">
    <location>
        <begin position="237"/>
        <end position="257"/>
    </location>
</feature>
<feature type="transmembrane region" description="Helical" evidence="1">
    <location>
        <begin position="265"/>
        <end position="285"/>
    </location>
</feature>
<feature type="transmembrane region" description="Helical" evidence="1">
    <location>
        <begin position="304"/>
        <end position="324"/>
    </location>
</feature>
<name>NUOH_ECOSE</name>
<dbReference type="EC" id="7.1.1.-" evidence="1"/>
<dbReference type="EMBL" id="AP009240">
    <property type="protein sequence ID" value="BAG78063.1"/>
    <property type="molecule type" value="Genomic_DNA"/>
</dbReference>
<dbReference type="RefSeq" id="WP_000118507.1">
    <property type="nucleotide sequence ID" value="NC_011415.1"/>
</dbReference>
<dbReference type="SMR" id="B6I7N2"/>
<dbReference type="GeneID" id="93774892"/>
<dbReference type="KEGG" id="ecy:ECSE_2539"/>
<dbReference type="HOGENOM" id="CLU_015134_0_1_6"/>
<dbReference type="Proteomes" id="UP000008199">
    <property type="component" value="Chromosome"/>
</dbReference>
<dbReference type="GO" id="GO:0005886">
    <property type="term" value="C:plasma membrane"/>
    <property type="evidence" value="ECO:0007669"/>
    <property type="project" value="UniProtKB-SubCell"/>
</dbReference>
<dbReference type="GO" id="GO:0003954">
    <property type="term" value="F:NADH dehydrogenase activity"/>
    <property type="evidence" value="ECO:0007669"/>
    <property type="project" value="TreeGrafter"/>
</dbReference>
<dbReference type="GO" id="GO:0016655">
    <property type="term" value="F:oxidoreductase activity, acting on NAD(P)H, quinone or similar compound as acceptor"/>
    <property type="evidence" value="ECO:0007669"/>
    <property type="project" value="UniProtKB-UniRule"/>
</dbReference>
<dbReference type="GO" id="GO:0048038">
    <property type="term" value="F:quinone binding"/>
    <property type="evidence" value="ECO:0007669"/>
    <property type="project" value="UniProtKB-KW"/>
</dbReference>
<dbReference type="GO" id="GO:0009060">
    <property type="term" value="P:aerobic respiration"/>
    <property type="evidence" value="ECO:0007669"/>
    <property type="project" value="TreeGrafter"/>
</dbReference>
<dbReference type="HAMAP" id="MF_01350">
    <property type="entry name" value="NDH1_NuoH"/>
    <property type="match status" value="1"/>
</dbReference>
<dbReference type="InterPro" id="IPR001694">
    <property type="entry name" value="NADH_UbQ_OxRdtase_su1/FPO"/>
</dbReference>
<dbReference type="InterPro" id="IPR018086">
    <property type="entry name" value="NADH_UbQ_OxRdtase_su1_CS"/>
</dbReference>
<dbReference type="NCBIfam" id="NF004740">
    <property type="entry name" value="PRK06076.1-1"/>
    <property type="match status" value="1"/>
</dbReference>
<dbReference type="NCBIfam" id="NF004741">
    <property type="entry name" value="PRK06076.1-2"/>
    <property type="match status" value="1"/>
</dbReference>
<dbReference type="PANTHER" id="PTHR11432">
    <property type="entry name" value="NADH DEHYDROGENASE SUBUNIT 1"/>
    <property type="match status" value="1"/>
</dbReference>
<dbReference type="PANTHER" id="PTHR11432:SF3">
    <property type="entry name" value="NADH-UBIQUINONE OXIDOREDUCTASE CHAIN 1"/>
    <property type="match status" value="1"/>
</dbReference>
<dbReference type="Pfam" id="PF00146">
    <property type="entry name" value="NADHdh"/>
    <property type="match status" value="1"/>
</dbReference>
<dbReference type="PROSITE" id="PS00667">
    <property type="entry name" value="COMPLEX1_ND1_1"/>
    <property type="match status" value="1"/>
</dbReference>
<dbReference type="PROSITE" id="PS00668">
    <property type="entry name" value="COMPLEX1_ND1_2"/>
    <property type="match status" value="1"/>
</dbReference>
<accession>B6I7N2</accession>
<sequence>MSWISPELIEILLTILKAVVILLVVVTCGAFMSFGERRLLGLFQNRYGPNRVGWGGSLQLVADMIKMFFKEDWIPKFSDRVIFTLAPMIAFTSLLLAFAIVPVSPGWVVADLNIGILFFLMMAGLAVYAVLFAGWSSNNKYSLLGAMRASAQTLSYEVFLGLSLMGVVAQAGSFNMTDIVNSQAHVWNVIPQFFGFITFAIAGVAVCHRHPFDQPEAEQELADGYHIEYSGMKFGLFFVGEYIGIVTISALMVTLFFGGWQGPLLPPFIWFALKTAFFMMMFILIRASLPRPRYDQVMSFGWKICLPLTLINLLVTAAVILWQAQ</sequence>
<gene>
    <name evidence="1" type="primary">nuoH</name>
    <name type="ordered locus">ECSE_2539</name>
</gene>
<keyword id="KW-0997">Cell inner membrane</keyword>
<keyword id="KW-1003">Cell membrane</keyword>
<keyword id="KW-0472">Membrane</keyword>
<keyword id="KW-0520">NAD</keyword>
<keyword id="KW-0874">Quinone</keyword>
<keyword id="KW-1278">Translocase</keyword>
<keyword id="KW-0812">Transmembrane</keyword>
<keyword id="KW-1133">Transmembrane helix</keyword>
<keyword id="KW-0830">Ubiquinone</keyword>
<comment type="function">
    <text evidence="1">NDH-1 shuttles electrons from NADH, via FMN and iron-sulfur (Fe-S) centers, to quinones in the respiratory chain. The immediate electron acceptor for the enzyme in this species is believed to be ubiquinone. Couples the redox reaction to proton translocation (for every two electrons transferred, four hydrogen ions are translocated across the cytoplasmic membrane), and thus conserves the redox energy in a proton gradient. This subunit may bind ubiquinone.</text>
</comment>
<comment type="catalytic activity">
    <reaction evidence="1">
        <text>a quinone + NADH + 5 H(+)(in) = a quinol + NAD(+) + 4 H(+)(out)</text>
        <dbReference type="Rhea" id="RHEA:57888"/>
        <dbReference type="ChEBI" id="CHEBI:15378"/>
        <dbReference type="ChEBI" id="CHEBI:24646"/>
        <dbReference type="ChEBI" id="CHEBI:57540"/>
        <dbReference type="ChEBI" id="CHEBI:57945"/>
        <dbReference type="ChEBI" id="CHEBI:132124"/>
    </reaction>
</comment>
<comment type="subunit">
    <text evidence="1">NDH-1 is composed of 13 different subunits. Subunits NuoA, H, J, K, L, M, N constitute the membrane sector of the complex.</text>
</comment>
<comment type="subcellular location">
    <subcellularLocation>
        <location evidence="1">Cell inner membrane</location>
        <topology evidence="1">Multi-pass membrane protein</topology>
    </subcellularLocation>
</comment>
<comment type="similarity">
    <text evidence="1">Belongs to the complex I subunit 1 family.</text>
</comment>
<organism>
    <name type="scientific">Escherichia coli (strain SE11)</name>
    <dbReference type="NCBI Taxonomy" id="409438"/>
    <lineage>
        <taxon>Bacteria</taxon>
        <taxon>Pseudomonadati</taxon>
        <taxon>Pseudomonadota</taxon>
        <taxon>Gammaproteobacteria</taxon>
        <taxon>Enterobacterales</taxon>
        <taxon>Enterobacteriaceae</taxon>
        <taxon>Escherichia</taxon>
    </lineage>
</organism>
<protein>
    <recommendedName>
        <fullName evidence="1">NADH-quinone oxidoreductase subunit H</fullName>
        <ecNumber evidence="1">7.1.1.-</ecNumber>
    </recommendedName>
    <alternativeName>
        <fullName evidence="1">NADH dehydrogenase I subunit H</fullName>
    </alternativeName>
    <alternativeName>
        <fullName evidence="1">NDH-1 subunit H</fullName>
    </alternativeName>
</protein>
<reference key="1">
    <citation type="journal article" date="2008" name="DNA Res.">
        <title>Complete genome sequence and comparative analysis of the wild-type commensal Escherichia coli strain SE11 isolated from a healthy adult.</title>
        <authorList>
            <person name="Oshima K."/>
            <person name="Toh H."/>
            <person name="Ogura Y."/>
            <person name="Sasamoto H."/>
            <person name="Morita H."/>
            <person name="Park S.-H."/>
            <person name="Ooka T."/>
            <person name="Iyoda S."/>
            <person name="Taylor T.D."/>
            <person name="Hayashi T."/>
            <person name="Itoh K."/>
            <person name="Hattori M."/>
        </authorList>
    </citation>
    <scope>NUCLEOTIDE SEQUENCE [LARGE SCALE GENOMIC DNA]</scope>
    <source>
        <strain>SE11</strain>
    </source>
</reference>
<evidence type="ECO:0000255" key="1">
    <source>
        <dbReference type="HAMAP-Rule" id="MF_01350"/>
    </source>
</evidence>
<proteinExistence type="inferred from homology"/>